<accession>B8I168</accession>
<evidence type="ECO:0000255" key="1">
    <source>
        <dbReference type="HAMAP-Rule" id="MF_00514"/>
    </source>
</evidence>
<evidence type="ECO:0000305" key="2"/>
<dbReference type="EMBL" id="CP001348">
    <property type="protein sequence ID" value="ACL75666.1"/>
    <property type="molecule type" value="Genomic_DNA"/>
</dbReference>
<dbReference type="RefSeq" id="WP_015924814.1">
    <property type="nucleotide sequence ID" value="NC_011898.1"/>
</dbReference>
<dbReference type="SMR" id="B8I168"/>
<dbReference type="STRING" id="394503.Ccel_1312"/>
<dbReference type="KEGG" id="cce:Ccel_1312"/>
<dbReference type="eggNOG" id="COG0291">
    <property type="taxonomic scope" value="Bacteria"/>
</dbReference>
<dbReference type="HOGENOM" id="CLU_169643_4_3_9"/>
<dbReference type="OrthoDB" id="47476at2"/>
<dbReference type="Proteomes" id="UP000001349">
    <property type="component" value="Chromosome"/>
</dbReference>
<dbReference type="GO" id="GO:0022625">
    <property type="term" value="C:cytosolic large ribosomal subunit"/>
    <property type="evidence" value="ECO:0007669"/>
    <property type="project" value="TreeGrafter"/>
</dbReference>
<dbReference type="GO" id="GO:0003735">
    <property type="term" value="F:structural constituent of ribosome"/>
    <property type="evidence" value="ECO:0007669"/>
    <property type="project" value="InterPro"/>
</dbReference>
<dbReference type="GO" id="GO:0006412">
    <property type="term" value="P:translation"/>
    <property type="evidence" value="ECO:0007669"/>
    <property type="project" value="UniProtKB-UniRule"/>
</dbReference>
<dbReference type="FunFam" id="4.10.410.60:FF:000001">
    <property type="entry name" value="50S ribosomal protein L35"/>
    <property type="match status" value="1"/>
</dbReference>
<dbReference type="Gene3D" id="4.10.410.60">
    <property type="match status" value="1"/>
</dbReference>
<dbReference type="HAMAP" id="MF_00514">
    <property type="entry name" value="Ribosomal_bL35"/>
    <property type="match status" value="1"/>
</dbReference>
<dbReference type="InterPro" id="IPR001706">
    <property type="entry name" value="Ribosomal_bL35"/>
</dbReference>
<dbReference type="InterPro" id="IPR021137">
    <property type="entry name" value="Ribosomal_bL35-like"/>
</dbReference>
<dbReference type="InterPro" id="IPR018265">
    <property type="entry name" value="Ribosomal_bL35_CS"/>
</dbReference>
<dbReference type="InterPro" id="IPR037229">
    <property type="entry name" value="Ribosomal_bL35_sf"/>
</dbReference>
<dbReference type="NCBIfam" id="TIGR00001">
    <property type="entry name" value="rpmI_bact"/>
    <property type="match status" value="1"/>
</dbReference>
<dbReference type="PANTHER" id="PTHR33343">
    <property type="entry name" value="54S RIBOSOMAL PROTEIN BL35M"/>
    <property type="match status" value="1"/>
</dbReference>
<dbReference type="PANTHER" id="PTHR33343:SF1">
    <property type="entry name" value="LARGE RIBOSOMAL SUBUNIT PROTEIN BL35M"/>
    <property type="match status" value="1"/>
</dbReference>
<dbReference type="Pfam" id="PF01632">
    <property type="entry name" value="Ribosomal_L35p"/>
    <property type="match status" value="1"/>
</dbReference>
<dbReference type="PRINTS" id="PR00064">
    <property type="entry name" value="RIBOSOMALL35"/>
</dbReference>
<dbReference type="SUPFAM" id="SSF143034">
    <property type="entry name" value="L35p-like"/>
    <property type="match status" value="1"/>
</dbReference>
<dbReference type="PROSITE" id="PS00936">
    <property type="entry name" value="RIBOSOMAL_L35"/>
    <property type="match status" value="1"/>
</dbReference>
<comment type="similarity">
    <text evidence="1">Belongs to the bacterial ribosomal protein bL35 family.</text>
</comment>
<proteinExistence type="inferred from homology"/>
<name>RL35_RUMCH</name>
<feature type="chain" id="PRO_1000146132" description="Large ribosomal subunit protein bL35">
    <location>
        <begin position="1"/>
        <end position="65"/>
    </location>
</feature>
<protein>
    <recommendedName>
        <fullName evidence="1">Large ribosomal subunit protein bL35</fullName>
    </recommendedName>
    <alternativeName>
        <fullName evidence="2">50S ribosomal protein L35</fullName>
    </alternativeName>
</protein>
<organism>
    <name type="scientific">Ruminiclostridium cellulolyticum (strain ATCC 35319 / DSM 5812 / JCM 6584 / H10)</name>
    <name type="common">Clostridium cellulolyticum</name>
    <dbReference type="NCBI Taxonomy" id="394503"/>
    <lineage>
        <taxon>Bacteria</taxon>
        <taxon>Bacillati</taxon>
        <taxon>Bacillota</taxon>
        <taxon>Clostridia</taxon>
        <taxon>Eubacteriales</taxon>
        <taxon>Oscillospiraceae</taxon>
        <taxon>Ruminiclostridium</taxon>
    </lineage>
</organism>
<reference key="1">
    <citation type="submission" date="2009-01" db="EMBL/GenBank/DDBJ databases">
        <title>Complete sequence of Clostridium cellulolyticum H10.</title>
        <authorList>
            <consortium name="US DOE Joint Genome Institute"/>
            <person name="Lucas S."/>
            <person name="Copeland A."/>
            <person name="Lapidus A."/>
            <person name="Glavina del Rio T."/>
            <person name="Dalin E."/>
            <person name="Tice H."/>
            <person name="Bruce D."/>
            <person name="Goodwin L."/>
            <person name="Pitluck S."/>
            <person name="Chertkov O."/>
            <person name="Saunders E."/>
            <person name="Brettin T."/>
            <person name="Detter J.C."/>
            <person name="Han C."/>
            <person name="Larimer F."/>
            <person name="Land M."/>
            <person name="Hauser L."/>
            <person name="Kyrpides N."/>
            <person name="Ivanova N."/>
            <person name="Zhou J."/>
            <person name="Richardson P."/>
        </authorList>
    </citation>
    <scope>NUCLEOTIDE SEQUENCE [LARGE SCALE GENOMIC DNA]</scope>
    <source>
        <strain>ATCC 35319 / DSM 5812 / JCM 6584 / H10</strain>
    </source>
</reference>
<sequence>MPKLKTHSASKKRFRVTATGKIKRGQAWRNHRLISKSRKAKKHHRLGAYVSAAQEATIKKLIPYK</sequence>
<keyword id="KW-1185">Reference proteome</keyword>
<keyword id="KW-0687">Ribonucleoprotein</keyword>
<keyword id="KW-0689">Ribosomal protein</keyword>
<gene>
    <name evidence="1" type="primary">rpmI</name>
    <name type="ordered locus">Ccel_1312</name>
</gene>